<protein>
    <recommendedName>
        <fullName>Lactotransferrin</fullName>
        <shortName>Lactoferrin</shortName>
        <ecNumber>3.4.21.-</ecNumber>
    </recommendedName>
</protein>
<sequence>LGLCLAAPRKSVRWCTISPAEAAKCAKFQRNMKKVRGPSVSCIRKTSSFECIQAIAANKADAVTLDGGLVYEAGLHPYKLRPVAAEVYQTRGKPQTRYYAVAVVKKGSGFQLNQLQGVKSCHTGLGRSAGWNIPIGTLRPYLNWTGPPEPLQKAVANFFSASCVPCADGKQYPNLCRLCAGTEADKCACSSQEPYFGYSGAFKCLENGAGDVAFVKDSTVFENLPDEADRDKYELLCPDNTRKPVDAFKECHLARVPSHAVVARSVDGREDLIWRLLHRAQEEFGRNKSSAFQLFKSTPENKDLLFKDSALGFVRIPSQIDSGLYLGANYLTATQNLRETAAEVAARRERVVWCAVGPEEERKCKQWSDVSNRKVACASASTTEECIALVLKGEADALNLDGGFIYVAGKCGLVPVLAENQKSQNSNAPDCVHRPPEGYLAVAVVRKSDADLTWNSLSGKKSCHTGVGRTAAWNIPMGLLFNQTGSCKFDKFFSQSCAPGADPQSSLCALCVGNNENENKCMPNSEERYYGYTGAFRCLAEKAGDVAFVKDVTVLQNTDGKNSEPWAKDLKQEDFELLCLDGTRKPVAEAESCHLARAPNHAVVSQSDRAQHLKKVLFLQQDQFGGNGPDCPGKFCLFKSETKNLLFNDNTECLAELQGKTTYEQYLGSEYVTSITNLRRCSSSPLLEACAFLRA</sequence>
<keyword id="KW-0002">3D-structure</keyword>
<keyword id="KW-1015">Disulfide bond</keyword>
<keyword id="KW-0325">Glycoprotein</keyword>
<keyword id="KW-0378">Hydrolase</keyword>
<keyword id="KW-0391">Immunity</keyword>
<keyword id="KW-0406">Ion transport</keyword>
<keyword id="KW-0408">Iron</keyword>
<keyword id="KW-0410">Iron transport</keyword>
<keyword id="KW-0479">Metal-binding</keyword>
<keyword id="KW-0892">Osteogenesis</keyword>
<keyword id="KW-0645">Protease</keyword>
<keyword id="KW-1185">Reference proteome</keyword>
<keyword id="KW-0677">Repeat</keyword>
<keyword id="KW-0964">Secreted</keyword>
<keyword id="KW-0720">Serine protease</keyword>
<keyword id="KW-0732">Signal</keyword>
<keyword id="KW-0813">Transport</keyword>
<name>TRFL_HORSE</name>
<feature type="signal peptide">
    <location>
        <begin position="1" status="less than"/>
        <end position="6"/>
    </location>
</feature>
<feature type="chain" id="PRO_0000035731" description="Lactotransferrin">
    <location>
        <begin position="7"/>
        <end position="695"/>
    </location>
</feature>
<feature type="domain" description="Transferrin-like 1" evidence="4">
    <location>
        <begin position="12"/>
        <end position="339"/>
    </location>
</feature>
<feature type="domain" description="Transferrin-like 2" evidence="4">
    <location>
        <begin position="351"/>
        <end position="680"/>
    </location>
</feature>
<feature type="active site" evidence="4">
    <location>
        <position position="79"/>
    </location>
</feature>
<feature type="active site" description="Nucleophile" evidence="4">
    <location>
        <position position="265"/>
    </location>
</feature>
<feature type="binding site" evidence="4 5 6 8 9">
    <location>
        <position position="66"/>
    </location>
    <ligand>
        <name>Fe(3+)</name>
        <dbReference type="ChEBI" id="CHEBI:29034"/>
        <label>1</label>
    </ligand>
</feature>
<feature type="binding site" evidence="4 5 6 8 9">
    <location>
        <position position="98"/>
    </location>
    <ligand>
        <name>Fe(3+)</name>
        <dbReference type="ChEBI" id="CHEBI:29034"/>
        <label>1</label>
    </ligand>
</feature>
<feature type="binding site" evidence="4 5 7">
    <location>
        <position position="123"/>
    </location>
    <ligand>
        <name>hydrogencarbonate</name>
        <dbReference type="ChEBI" id="CHEBI:17544"/>
        <label>1</label>
    </ligand>
</feature>
<feature type="binding site" evidence="4 5 7">
    <location>
        <position position="127"/>
    </location>
    <ligand>
        <name>hydrogencarbonate</name>
        <dbReference type="ChEBI" id="CHEBI:17544"/>
        <label>1</label>
    </ligand>
</feature>
<feature type="binding site" evidence="4 5 7">
    <location>
        <position position="129"/>
    </location>
    <ligand>
        <name>hydrogencarbonate</name>
        <dbReference type="ChEBI" id="CHEBI:17544"/>
        <label>1</label>
    </ligand>
</feature>
<feature type="binding site" evidence="4 5 7">
    <location>
        <position position="130"/>
    </location>
    <ligand>
        <name>hydrogencarbonate</name>
        <dbReference type="ChEBI" id="CHEBI:17544"/>
        <label>1</label>
    </ligand>
</feature>
<feature type="binding site" evidence="4 5 6 8 9">
    <location>
        <position position="198"/>
    </location>
    <ligand>
        <name>Fe(3+)</name>
        <dbReference type="ChEBI" id="CHEBI:29034"/>
        <label>1</label>
    </ligand>
</feature>
<feature type="binding site" evidence="4 5 6 8 9">
    <location>
        <position position="259"/>
    </location>
    <ligand>
        <name>Fe(3+)</name>
        <dbReference type="ChEBI" id="CHEBI:29034"/>
        <label>1</label>
    </ligand>
</feature>
<feature type="binding site" evidence="4 5 6 8 9">
    <location>
        <position position="401"/>
    </location>
    <ligand>
        <name>Fe(3+)</name>
        <dbReference type="ChEBI" id="CHEBI:29034"/>
        <label>2</label>
    </ligand>
</feature>
<feature type="binding site" evidence="9">
    <location>
        <position position="436"/>
    </location>
    <ligand>
        <name>D-glucose</name>
        <dbReference type="ChEBI" id="CHEBI:4167"/>
    </ligand>
</feature>
<feature type="binding site" evidence="4 5 6 8 9">
    <location>
        <position position="439"/>
    </location>
    <ligand>
        <name>Fe(3+)</name>
        <dbReference type="ChEBI" id="CHEBI:29034"/>
        <label>2</label>
    </ligand>
</feature>
<feature type="binding site" evidence="4 5 7">
    <location>
        <position position="465"/>
    </location>
    <ligand>
        <name>hydrogencarbonate</name>
        <dbReference type="ChEBI" id="CHEBI:17544"/>
        <label>2</label>
    </ligand>
</feature>
<feature type="binding site" evidence="4 5 7">
    <location>
        <position position="469"/>
    </location>
    <ligand>
        <name>hydrogencarbonate</name>
        <dbReference type="ChEBI" id="CHEBI:17544"/>
        <label>2</label>
    </ligand>
</feature>
<feature type="binding site" evidence="4 5 7">
    <location>
        <position position="471"/>
    </location>
    <ligand>
        <name>hydrogencarbonate</name>
        <dbReference type="ChEBI" id="CHEBI:17544"/>
        <label>2</label>
    </ligand>
</feature>
<feature type="binding site" evidence="4 5 7">
    <location>
        <position position="472"/>
    </location>
    <ligand>
        <name>hydrogencarbonate</name>
        <dbReference type="ChEBI" id="CHEBI:17544"/>
        <label>2</label>
    </ligand>
</feature>
<feature type="binding site" evidence="4 5 6 8 9">
    <location>
        <position position="532"/>
    </location>
    <ligand>
        <name>Fe(3+)</name>
        <dbReference type="ChEBI" id="CHEBI:29034"/>
        <label>2</label>
    </ligand>
</feature>
<feature type="binding site" evidence="9">
    <location>
        <position position="600"/>
    </location>
    <ligand>
        <name>D-glucose</name>
        <dbReference type="ChEBI" id="CHEBI:4167"/>
    </ligand>
</feature>
<feature type="binding site" evidence="4 5 6 8 9">
    <location>
        <position position="601"/>
    </location>
    <ligand>
        <name>Fe(3+)</name>
        <dbReference type="ChEBI" id="CHEBI:29034"/>
        <label>2</label>
    </ligand>
</feature>
<feature type="binding site" evidence="9">
    <location>
        <position position="666"/>
    </location>
    <ligand>
        <name>D-glucose</name>
        <dbReference type="ChEBI" id="CHEBI:4167"/>
    </ligand>
</feature>
<feature type="glycosylation site" description="N-linked (GlcNAc...) asparagine" evidence="3">
    <location>
        <position position="143"/>
    </location>
</feature>
<feature type="glycosylation site" description="N-linked (GlcNAc...) asparagine" evidence="3">
    <location>
        <position position="287"/>
    </location>
</feature>
<feature type="glycosylation site" description="N-linked (GlcNAc...) asparagine" evidence="3">
    <location>
        <position position="482"/>
    </location>
</feature>
<feature type="disulfide bond">
    <location>
        <begin position="15"/>
        <end position="51"/>
    </location>
</feature>
<feature type="disulfide bond">
    <location>
        <begin position="25"/>
        <end position="42"/>
    </location>
</feature>
<feature type="disulfide bond">
    <location>
        <begin position="121"/>
        <end position="204"/>
    </location>
</feature>
<feature type="disulfide bond">
    <location>
        <begin position="163"/>
        <end position="179"/>
    </location>
</feature>
<feature type="disulfide bond">
    <location>
        <begin position="166"/>
        <end position="189"/>
    </location>
</feature>
<feature type="disulfide bond">
    <location>
        <begin position="176"/>
        <end position="187"/>
    </location>
</feature>
<feature type="disulfide bond">
    <location>
        <begin position="237"/>
        <end position="251"/>
    </location>
</feature>
<feature type="disulfide bond">
    <location>
        <begin position="354"/>
        <end position="386"/>
    </location>
</feature>
<feature type="disulfide bond">
    <location>
        <begin position="364"/>
        <end position="377"/>
    </location>
</feature>
<feature type="disulfide bond">
    <location>
        <begin position="411"/>
        <end position="690"/>
    </location>
</feature>
<feature type="disulfide bond">
    <location>
        <begin position="431"/>
        <end position="653"/>
    </location>
</feature>
<feature type="disulfide bond">
    <location>
        <begin position="463"/>
        <end position="538"/>
    </location>
</feature>
<feature type="disulfide bond">
    <location>
        <begin position="487"/>
        <end position="681"/>
    </location>
</feature>
<feature type="disulfide bond">
    <location>
        <begin position="497"/>
        <end position="511"/>
    </location>
</feature>
<feature type="disulfide bond">
    <location>
        <begin position="508"/>
        <end position="521"/>
    </location>
</feature>
<feature type="disulfide bond">
    <location>
        <begin position="579"/>
        <end position="593"/>
    </location>
</feature>
<feature type="disulfide bond">
    <location>
        <begin position="631"/>
        <end position="636"/>
    </location>
</feature>
<feature type="non-terminal residue">
    <location>
        <position position="1"/>
    </location>
</feature>
<feature type="strand" evidence="10">
    <location>
        <begin position="12"/>
        <end position="18"/>
    </location>
</feature>
<feature type="helix" evidence="10">
    <location>
        <begin position="19"/>
        <end position="34"/>
    </location>
</feature>
<feature type="strand" evidence="10">
    <location>
        <begin position="40"/>
        <end position="44"/>
    </location>
</feature>
<feature type="helix" evidence="10">
    <location>
        <begin position="48"/>
        <end position="56"/>
    </location>
</feature>
<feature type="strand" evidence="10">
    <location>
        <begin position="62"/>
        <end position="65"/>
    </location>
</feature>
<feature type="helix" evidence="10">
    <location>
        <begin position="67"/>
        <end position="74"/>
    </location>
</feature>
<feature type="turn" evidence="10">
    <location>
        <begin position="76"/>
        <end position="78"/>
    </location>
</feature>
<feature type="strand" evidence="10">
    <location>
        <begin position="80"/>
        <end position="88"/>
    </location>
</feature>
<feature type="strand" evidence="10">
    <location>
        <begin position="91"/>
        <end position="93"/>
    </location>
</feature>
<feature type="strand" evidence="10">
    <location>
        <begin position="95"/>
        <end position="105"/>
    </location>
</feature>
<feature type="helix" evidence="10">
    <location>
        <begin position="112"/>
        <end position="114"/>
    </location>
</feature>
<feature type="strand" evidence="10">
    <location>
        <begin position="119"/>
        <end position="123"/>
    </location>
</feature>
<feature type="turn" evidence="10">
    <location>
        <begin position="128"/>
        <end position="131"/>
    </location>
</feature>
<feature type="helix" evidence="10">
    <location>
        <begin position="132"/>
        <end position="137"/>
    </location>
</feature>
<feature type="helix" evidence="10">
    <location>
        <begin position="139"/>
        <end position="142"/>
    </location>
</feature>
<feature type="helix" evidence="10">
    <location>
        <begin position="151"/>
        <end position="158"/>
    </location>
</feature>
<feature type="strand" evidence="10">
    <location>
        <begin position="159"/>
        <end position="163"/>
    </location>
</feature>
<feature type="turn" evidence="10">
    <location>
        <begin position="169"/>
        <end position="171"/>
    </location>
</feature>
<feature type="helix" evidence="10">
    <location>
        <begin position="173"/>
        <end position="175"/>
    </location>
</feature>
<feature type="turn" evidence="10">
    <location>
        <begin position="176"/>
        <end position="178"/>
    </location>
</feature>
<feature type="turn" evidence="10">
    <location>
        <begin position="183"/>
        <end position="187"/>
    </location>
</feature>
<feature type="strand" evidence="12">
    <location>
        <begin position="189"/>
        <end position="193"/>
    </location>
</feature>
<feature type="helix" evidence="10">
    <location>
        <begin position="197"/>
        <end position="206"/>
    </location>
</feature>
<feature type="strand" evidence="10">
    <location>
        <begin position="211"/>
        <end position="218"/>
    </location>
</feature>
<feature type="helix" evidence="10">
    <location>
        <begin position="219"/>
        <end position="223"/>
    </location>
</feature>
<feature type="helix" evidence="10">
    <location>
        <begin position="227"/>
        <end position="230"/>
    </location>
</feature>
<feature type="strand" evidence="10">
    <location>
        <begin position="233"/>
        <end position="237"/>
    </location>
</feature>
<feature type="turn" evidence="10">
    <location>
        <begin position="238"/>
        <end position="240"/>
    </location>
</feature>
<feature type="strand" evidence="10">
    <location>
        <begin position="241"/>
        <end position="244"/>
    </location>
</feature>
<feature type="helix" evidence="10">
    <location>
        <begin position="245"/>
        <end position="247"/>
    </location>
</feature>
<feature type="turn" evidence="10">
    <location>
        <begin position="248"/>
        <end position="250"/>
    </location>
</feature>
<feature type="strand" evidence="10">
    <location>
        <begin position="253"/>
        <end position="257"/>
    </location>
</feature>
<feature type="strand" evidence="10">
    <location>
        <begin position="260"/>
        <end position="267"/>
    </location>
</feature>
<feature type="helix" evidence="10">
    <location>
        <begin position="270"/>
        <end position="284"/>
    </location>
</feature>
<feature type="turn" evidence="11">
    <location>
        <begin position="286"/>
        <end position="288"/>
    </location>
</feature>
<feature type="strand" evidence="10">
    <location>
        <begin position="299"/>
        <end position="301"/>
    </location>
</feature>
<feature type="strand" evidence="13">
    <location>
        <begin position="304"/>
        <end position="306"/>
    </location>
</feature>
<feature type="strand" evidence="10">
    <location>
        <begin position="312"/>
        <end position="315"/>
    </location>
</feature>
<feature type="helix" evidence="10">
    <location>
        <begin position="322"/>
        <end position="326"/>
    </location>
</feature>
<feature type="helix" evidence="10">
    <location>
        <begin position="328"/>
        <end position="336"/>
    </location>
</feature>
<feature type="helix" evidence="10">
    <location>
        <begin position="341"/>
        <end position="349"/>
    </location>
</feature>
<feature type="strand" evidence="10">
    <location>
        <begin position="350"/>
        <end position="357"/>
    </location>
</feature>
<feature type="helix" evidence="10">
    <location>
        <begin position="358"/>
        <end position="370"/>
    </location>
</feature>
<feature type="strand" evidence="10">
    <location>
        <begin position="373"/>
        <end position="382"/>
    </location>
</feature>
<feature type="helix" evidence="10">
    <location>
        <begin position="383"/>
        <end position="392"/>
    </location>
</feature>
<feature type="strand" evidence="10">
    <location>
        <begin position="397"/>
        <end position="400"/>
    </location>
</feature>
<feature type="helix" evidence="10">
    <location>
        <begin position="402"/>
        <end position="410"/>
    </location>
</feature>
<feature type="strand" evidence="10">
    <location>
        <begin position="414"/>
        <end position="422"/>
    </location>
</feature>
<feature type="strand" evidence="12">
    <location>
        <begin position="424"/>
        <end position="426"/>
    </location>
</feature>
<feature type="helix" evidence="10">
    <location>
        <begin position="429"/>
        <end position="433"/>
    </location>
</feature>
<feature type="strand" evidence="10">
    <location>
        <begin position="439"/>
        <end position="448"/>
    </location>
</feature>
<feature type="helix" evidence="10">
    <location>
        <begin position="454"/>
        <end position="456"/>
    </location>
</feature>
<feature type="strand" evidence="10">
    <location>
        <begin position="462"/>
        <end position="465"/>
    </location>
</feature>
<feature type="turn" evidence="10">
    <location>
        <begin position="470"/>
        <end position="473"/>
    </location>
</feature>
<feature type="helix" evidence="10">
    <location>
        <begin position="474"/>
        <end position="484"/>
    </location>
</feature>
<feature type="helix" evidence="10">
    <location>
        <begin position="489"/>
        <end position="491"/>
    </location>
</feature>
<feature type="strand" evidence="10">
    <location>
        <begin position="493"/>
        <end position="497"/>
    </location>
</feature>
<feature type="strand" evidence="12">
    <location>
        <begin position="499"/>
        <end position="501"/>
    </location>
</feature>
<feature type="strand" evidence="10">
    <location>
        <begin position="508"/>
        <end position="510"/>
    </location>
</feature>
<feature type="strand" evidence="12">
    <location>
        <begin position="523"/>
        <end position="527"/>
    </location>
</feature>
<feature type="helix" evidence="10">
    <location>
        <begin position="531"/>
        <end position="540"/>
    </location>
</feature>
<feature type="strand" evidence="10">
    <location>
        <begin position="545"/>
        <end position="550"/>
    </location>
</feature>
<feature type="helix" evidence="10">
    <location>
        <begin position="551"/>
        <end position="555"/>
    </location>
</feature>
<feature type="turn" evidence="12">
    <location>
        <begin position="556"/>
        <end position="560"/>
    </location>
</feature>
<feature type="helix" evidence="10">
    <location>
        <begin position="565"/>
        <end position="568"/>
    </location>
</feature>
<feature type="strand" evidence="10">
    <location>
        <begin position="574"/>
        <end position="578"/>
    </location>
</feature>
<feature type="strand" evidence="12">
    <location>
        <begin position="580"/>
        <end position="582"/>
    </location>
</feature>
<feature type="strand" evidence="10">
    <location>
        <begin position="584"/>
        <end position="586"/>
    </location>
</feature>
<feature type="helix" evidence="10">
    <location>
        <begin position="587"/>
        <end position="592"/>
    </location>
</feature>
<feature type="strand" evidence="10">
    <location>
        <begin position="595"/>
        <end position="598"/>
    </location>
</feature>
<feature type="strand" evidence="10">
    <location>
        <begin position="602"/>
        <end position="605"/>
    </location>
</feature>
<feature type="turn" evidence="10">
    <location>
        <begin position="607"/>
        <end position="609"/>
    </location>
</feature>
<feature type="helix" evidence="10">
    <location>
        <begin position="610"/>
        <end position="624"/>
    </location>
</feature>
<feature type="helix" evidence="10">
    <location>
        <begin position="631"/>
        <end position="634"/>
    </location>
</feature>
<feature type="turn" evidence="12">
    <location>
        <begin position="641"/>
        <end position="643"/>
    </location>
</feature>
<feature type="strand" evidence="10">
    <location>
        <begin position="651"/>
        <end position="655"/>
    </location>
</feature>
<feature type="helix" evidence="10">
    <location>
        <begin position="663"/>
        <end position="667"/>
    </location>
</feature>
<feature type="helix" evidence="10">
    <location>
        <begin position="669"/>
        <end position="679"/>
    </location>
</feature>
<feature type="helix" evidence="10">
    <location>
        <begin position="685"/>
        <end position="693"/>
    </location>
</feature>
<gene>
    <name type="primary">LTF</name>
</gene>
<reference key="1">
    <citation type="journal article" date="1999" name="J. Mol. Biol.">
        <title>Three-dimensional structure of mare diferric lactoferrin at 2.6-A resolution.</title>
        <authorList>
            <person name="Sharma A.K."/>
            <person name="Paramasivam M."/>
            <person name="Srinivasan A."/>
            <person name="Yadav M.P."/>
            <person name="Singh T.P."/>
        </authorList>
    </citation>
    <scope>NUCLEOTIDE SEQUENCE [MRNA]</scope>
    <scope>X-RAY CRYSTALLOGRAPHY (2.62 ANGSTROMS) OF 7-695 IN COMPLEX WITH IRON AND CARBONATE</scope>
    <source>
        <tissue>Mammary gland</tissue>
    </source>
</reference>
<reference key="2">
    <citation type="journal article" date="1999" name="Acta Crystallogr. D">
        <title>Structure of mare apolactoferrin: the N and C lobes are in the closed form.</title>
        <authorList>
            <person name="Sharma A.K."/>
            <person name="Rajashankar K.R."/>
            <person name="Yadav M.P."/>
            <person name="Singh T.P."/>
        </authorList>
    </citation>
    <scope>X-RAY CRYSTALLOGRAPHY (3.80 ANGSTROMS) OF 7-695</scope>
</reference>
<reference key="3">
    <citation type="journal article" date="1999" name="Acta Crystallogr. D">
        <title>Structure of oxalate-substituted diferric mare lactoferrin at 2.7 A resolution.</title>
        <authorList>
            <person name="Sharma A.K."/>
            <person name="Singh T.P."/>
        </authorList>
    </citation>
    <scope>X-RAY CRYSTALLOGRAPHY (2.70 ANGSTROMS) OF 7-695 IN COMPLEX WITH IRON</scope>
</reference>
<reference key="4">
    <citation type="journal article" date="1999" name="Acta Crystallogr. D">
        <title>Lactoferrin-metal interactions: first crystal structure of a complex of lactoferrin with a lanthanide ion (Sm3+) at 3.4 A resolution.</title>
        <authorList>
            <person name="Sharma A.K."/>
            <person name="Singh T.P."/>
        </authorList>
    </citation>
    <scope>X-RAY CRYSTALLOGRAPHY (3.40 ANGSTROMS) OF 7-695 IN COMPLEX WITH CARBONATE</scope>
</reference>
<reference key="5">
    <citation type="journal article" date="2001" name="Proteins">
        <title>Lactoferrin-melanin interaction and its possible implications in melanin polymerization: crystal structure of the complex formed between mare lactoferrin and melanin monomers at 2.7-A resolution.</title>
        <authorList>
            <person name="Sharma A.K."/>
            <person name="Kumar S."/>
            <person name="Sharma V."/>
            <person name="Nagpal A."/>
            <person name="Singh N."/>
            <person name="Tamboli I."/>
            <person name="Mani I."/>
            <person name="Raman G."/>
            <person name="Singh T.P."/>
        </authorList>
    </citation>
    <scope>X-RAY CRYSTALLOGRAPHY (2.70 ANGSTROMS) IN COMPLEX WITH IRON</scope>
</reference>
<reference key="6">
    <citation type="journal article" date="2002" name="Acta Crystallogr. D">
        <title>Crystal structure of equine apolactoferrin at 303 K providing further evidence of closed conformations of N and C lobes.</title>
        <authorList>
            <person name="Kumar P."/>
            <person name="Khan J.A."/>
            <person name="Yadav S."/>
            <person name="Singh T.P."/>
        </authorList>
    </citation>
    <scope>X-RAY CRYSTALLOGRAPHY (3.20 ANGSTROMS) OF 7-695</scope>
</reference>
<reference key="7">
    <citation type="submission" date="2008-04" db="PDB data bank">
        <title>Crystal structure of the complex of Lactoferrin with 6-(Hydroxymethyl)oxane-2,3,4,5-tetrol at 3.49 A resolution.</title>
        <authorList>
            <person name="Mir R."/>
            <person name="Kaur A."/>
            <person name="Singh A.K."/>
            <person name="Singh N."/>
            <person name="Kaur P."/>
            <person name="Sharma S."/>
            <person name="Singh T.P."/>
        </authorList>
    </citation>
    <scope>X-RAY CRYSTALLOGRAPHY (3.49 ANGSTROMS) OF 7-695 IN COMPLEX WITH GLUCOSE AND IRON</scope>
</reference>
<evidence type="ECO:0000250" key="1"/>
<evidence type="ECO:0000250" key="2">
    <source>
        <dbReference type="UniProtKB" id="P02788"/>
    </source>
</evidence>
<evidence type="ECO:0000255" key="3"/>
<evidence type="ECO:0000255" key="4">
    <source>
        <dbReference type="PROSITE-ProRule" id="PRU00741"/>
    </source>
</evidence>
<evidence type="ECO:0000269" key="5">
    <source>
    </source>
</evidence>
<evidence type="ECO:0000269" key="6">
    <source>
    </source>
</evidence>
<evidence type="ECO:0000269" key="7">
    <source>
    </source>
</evidence>
<evidence type="ECO:0000269" key="8">
    <source>
    </source>
</evidence>
<evidence type="ECO:0000269" key="9">
    <source ref="7"/>
</evidence>
<evidence type="ECO:0007829" key="10">
    <source>
        <dbReference type="PDB" id="1B1X"/>
    </source>
</evidence>
<evidence type="ECO:0007829" key="11">
    <source>
        <dbReference type="PDB" id="1F9B"/>
    </source>
</evidence>
<evidence type="ECO:0007829" key="12">
    <source>
        <dbReference type="PDB" id="1I6B"/>
    </source>
</evidence>
<evidence type="ECO:0007829" key="13">
    <source>
        <dbReference type="PDB" id="3CR9"/>
    </source>
</evidence>
<accession>O77811</accession>
<dbReference type="EC" id="3.4.21.-"/>
<dbReference type="EMBL" id="AJ010930">
    <property type="protein sequence ID" value="CAA09407.1"/>
    <property type="molecule type" value="mRNA"/>
</dbReference>
<dbReference type="PDB" id="1B1X">
    <property type="method" value="X-ray"/>
    <property type="resolution" value="2.62 A"/>
    <property type="chains" value="A=7-695"/>
</dbReference>
<dbReference type="PDB" id="1B7U">
    <property type="method" value="X-ray"/>
    <property type="resolution" value="3.80 A"/>
    <property type="chains" value="A=7-695"/>
</dbReference>
<dbReference type="PDB" id="1B7Z">
    <property type="method" value="X-ray"/>
    <property type="resolution" value="2.70 A"/>
    <property type="chains" value="A=7-695"/>
</dbReference>
<dbReference type="PDB" id="1F9B">
    <property type="method" value="X-ray"/>
    <property type="resolution" value="2.70 A"/>
    <property type="chains" value="A=1-695"/>
</dbReference>
<dbReference type="PDB" id="1I6B">
    <property type="method" value="X-ray"/>
    <property type="resolution" value="3.20 A"/>
    <property type="chains" value="A=7-695"/>
</dbReference>
<dbReference type="PDB" id="1QJM">
    <property type="method" value="X-ray"/>
    <property type="resolution" value="3.40 A"/>
    <property type="chains" value="A=7-695"/>
</dbReference>
<dbReference type="PDB" id="3CR9">
    <property type="method" value="X-ray"/>
    <property type="resolution" value="3.49 A"/>
    <property type="chains" value="A=7-695"/>
</dbReference>
<dbReference type="PDBsum" id="1B1X"/>
<dbReference type="PDBsum" id="1B7U"/>
<dbReference type="PDBsum" id="1B7Z"/>
<dbReference type="PDBsum" id="1F9B"/>
<dbReference type="PDBsum" id="1I6B"/>
<dbReference type="PDBsum" id="1QJM"/>
<dbReference type="PDBsum" id="3CR9"/>
<dbReference type="SMR" id="O77811"/>
<dbReference type="FunCoup" id="O77811">
    <property type="interactions" value="196"/>
</dbReference>
<dbReference type="IntAct" id="O77811">
    <property type="interactions" value="1"/>
</dbReference>
<dbReference type="STRING" id="9796.ENSECAP00000033689"/>
<dbReference type="MEROPS" id="S60.001"/>
<dbReference type="GlyCosmos" id="O77811">
    <property type="glycosylation" value="3 sites, No reported glycans"/>
</dbReference>
<dbReference type="PaxDb" id="9796-ENSECAP00000033689"/>
<dbReference type="InParanoid" id="O77811"/>
<dbReference type="EvolutionaryTrace" id="O77811"/>
<dbReference type="Proteomes" id="UP000002281">
    <property type="component" value="Unplaced"/>
</dbReference>
<dbReference type="GO" id="GO:0005769">
    <property type="term" value="C:early endosome"/>
    <property type="evidence" value="ECO:0000318"/>
    <property type="project" value="GO_Central"/>
</dbReference>
<dbReference type="GO" id="GO:0005615">
    <property type="term" value="C:extracellular space"/>
    <property type="evidence" value="ECO:0000318"/>
    <property type="project" value="GO_Central"/>
</dbReference>
<dbReference type="GO" id="GO:0005886">
    <property type="term" value="C:plasma membrane"/>
    <property type="evidence" value="ECO:0000318"/>
    <property type="project" value="GO_Central"/>
</dbReference>
<dbReference type="GO" id="GO:0055037">
    <property type="term" value="C:recycling endosome"/>
    <property type="evidence" value="ECO:0000318"/>
    <property type="project" value="GO_Central"/>
</dbReference>
<dbReference type="GO" id="GO:0042581">
    <property type="term" value="C:specific granule"/>
    <property type="evidence" value="ECO:0000250"/>
    <property type="project" value="UniProtKB"/>
</dbReference>
<dbReference type="GO" id="GO:0046872">
    <property type="term" value="F:metal ion binding"/>
    <property type="evidence" value="ECO:0007669"/>
    <property type="project" value="UniProtKB-KW"/>
</dbReference>
<dbReference type="GO" id="GO:0008236">
    <property type="term" value="F:serine-type peptidase activity"/>
    <property type="evidence" value="ECO:0007669"/>
    <property type="project" value="UniProtKB-KW"/>
</dbReference>
<dbReference type="GO" id="GO:0019731">
    <property type="term" value="P:antibacterial humoral response"/>
    <property type="evidence" value="ECO:0000250"/>
    <property type="project" value="UniProtKB"/>
</dbReference>
<dbReference type="GO" id="GO:0019732">
    <property type="term" value="P:antifungal humoral response"/>
    <property type="evidence" value="ECO:0000250"/>
    <property type="project" value="UniProtKB"/>
</dbReference>
<dbReference type="GO" id="GO:0060349">
    <property type="term" value="P:bone morphogenesis"/>
    <property type="evidence" value="ECO:0000250"/>
    <property type="project" value="UniProtKB"/>
</dbReference>
<dbReference type="GO" id="GO:0002227">
    <property type="term" value="P:innate immune response in mucosa"/>
    <property type="evidence" value="ECO:0000250"/>
    <property type="project" value="UniProtKB"/>
</dbReference>
<dbReference type="GO" id="GO:0006826">
    <property type="term" value="P:iron ion transport"/>
    <property type="evidence" value="ECO:0000318"/>
    <property type="project" value="GO_Central"/>
</dbReference>
<dbReference type="GO" id="GO:0043066">
    <property type="term" value="P:negative regulation of apoptotic process"/>
    <property type="evidence" value="ECO:0000250"/>
    <property type="project" value="UniProtKB"/>
</dbReference>
<dbReference type="GO" id="GO:0031665">
    <property type="term" value="P:negative regulation of lipopolysaccharide-mediated signaling pathway"/>
    <property type="evidence" value="ECO:0000250"/>
    <property type="project" value="UniProtKB"/>
</dbReference>
<dbReference type="GO" id="GO:2001205">
    <property type="term" value="P:negative regulation of osteoclast development"/>
    <property type="evidence" value="ECO:0000250"/>
    <property type="project" value="UniProtKB"/>
</dbReference>
<dbReference type="GO" id="GO:1900229">
    <property type="term" value="P:negative regulation of single-species biofilm formation in or on host organism"/>
    <property type="evidence" value="ECO:0000250"/>
    <property type="project" value="UniProtKB"/>
</dbReference>
<dbReference type="GO" id="GO:2000308">
    <property type="term" value="P:negative regulation of tumor necrosis factor (ligand) superfamily member 11 production"/>
    <property type="evidence" value="ECO:0000250"/>
    <property type="project" value="UniProtKB"/>
</dbReference>
<dbReference type="GO" id="GO:0001503">
    <property type="term" value="P:ossification"/>
    <property type="evidence" value="ECO:0007669"/>
    <property type="project" value="UniProtKB-KW"/>
</dbReference>
<dbReference type="GO" id="GO:1900159">
    <property type="term" value="P:positive regulation of bone mineralization involved in bone maturation"/>
    <property type="evidence" value="ECO:0000250"/>
    <property type="project" value="UniProtKB"/>
</dbReference>
<dbReference type="GO" id="GO:1902732">
    <property type="term" value="P:positive regulation of chondrocyte proliferation"/>
    <property type="evidence" value="ECO:0000250"/>
    <property type="project" value="UniProtKB"/>
</dbReference>
<dbReference type="GO" id="GO:0045669">
    <property type="term" value="P:positive regulation of osteoblast differentiation"/>
    <property type="evidence" value="ECO:0000250"/>
    <property type="project" value="UniProtKB"/>
</dbReference>
<dbReference type="GO" id="GO:0033690">
    <property type="term" value="P:positive regulation of osteoblast proliferation"/>
    <property type="evidence" value="ECO:0000250"/>
    <property type="project" value="UniProtKB"/>
</dbReference>
<dbReference type="GO" id="GO:0006508">
    <property type="term" value="P:proteolysis"/>
    <property type="evidence" value="ECO:0007669"/>
    <property type="project" value="UniProtKB-KW"/>
</dbReference>
<dbReference type="GO" id="GO:0001817">
    <property type="term" value="P:regulation of cytokine production"/>
    <property type="evidence" value="ECO:0000250"/>
    <property type="project" value="UniProtKB"/>
</dbReference>
<dbReference type="GO" id="GO:0032680">
    <property type="term" value="P:regulation of tumor necrosis factor production"/>
    <property type="evidence" value="ECO:0000250"/>
    <property type="project" value="UniProtKB"/>
</dbReference>
<dbReference type="CDD" id="cd13617">
    <property type="entry name" value="PBP2_transferrin_C"/>
    <property type="match status" value="1"/>
</dbReference>
<dbReference type="CDD" id="cd13618">
    <property type="entry name" value="PBP2_transferrin_N"/>
    <property type="match status" value="1"/>
</dbReference>
<dbReference type="FunFam" id="3.40.190.10:FF:000095">
    <property type="entry name" value="Lactotransferrin"/>
    <property type="match status" value="1"/>
</dbReference>
<dbReference type="FunFam" id="3.40.190.10:FF:000105">
    <property type="entry name" value="Serotransferrin"/>
    <property type="match status" value="1"/>
</dbReference>
<dbReference type="Gene3D" id="3.40.190.10">
    <property type="entry name" value="Periplasmic binding protein-like II"/>
    <property type="match status" value="4"/>
</dbReference>
<dbReference type="InterPro" id="IPR016357">
    <property type="entry name" value="Transferrin"/>
</dbReference>
<dbReference type="InterPro" id="IPR001156">
    <property type="entry name" value="Transferrin-like_dom"/>
</dbReference>
<dbReference type="InterPro" id="IPR018195">
    <property type="entry name" value="Transferrin_Fe_BS"/>
</dbReference>
<dbReference type="PANTHER" id="PTHR11485:SF55">
    <property type="entry name" value="LACTOTRANSFERRIN"/>
    <property type="match status" value="1"/>
</dbReference>
<dbReference type="PANTHER" id="PTHR11485">
    <property type="entry name" value="TRANSFERRIN"/>
    <property type="match status" value="1"/>
</dbReference>
<dbReference type="Pfam" id="PF00405">
    <property type="entry name" value="Transferrin"/>
    <property type="match status" value="2"/>
</dbReference>
<dbReference type="PIRSF" id="PIRSF002549">
    <property type="entry name" value="Transferrin"/>
    <property type="match status" value="1"/>
</dbReference>
<dbReference type="PRINTS" id="PR00422">
    <property type="entry name" value="TRANSFERRIN"/>
</dbReference>
<dbReference type="SMART" id="SM00094">
    <property type="entry name" value="TR_FER"/>
    <property type="match status" value="2"/>
</dbReference>
<dbReference type="SUPFAM" id="SSF53850">
    <property type="entry name" value="Periplasmic binding protein-like II"/>
    <property type="match status" value="2"/>
</dbReference>
<dbReference type="PROSITE" id="PS00205">
    <property type="entry name" value="TRANSFERRIN_LIKE_1"/>
    <property type="match status" value="2"/>
</dbReference>
<dbReference type="PROSITE" id="PS00206">
    <property type="entry name" value="TRANSFERRIN_LIKE_2"/>
    <property type="match status" value="2"/>
</dbReference>
<dbReference type="PROSITE" id="PS00207">
    <property type="entry name" value="TRANSFERRIN_LIKE_3"/>
    <property type="match status" value="2"/>
</dbReference>
<dbReference type="PROSITE" id="PS51408">
    <property type="entry name" value="TRANSFERRIN_LIKE_4"/>
    <property type="match status" value="2"/>
</dbReference>
<comment type="function">
    <text evidence="2">Transferrins are iron binding transport proteins which can bind two Fe(3+) ions in association with the binding of an anion, usually bicarbonate.</text>
</comment>
<comment type="function">
    <molecule>Lactotransferrin</molecule>
    <text evidence="2">Major iron-binding and multifunctional protein found in exocrine fluids such as breast milk and mucosal secretions. Has antimicrobial activity, which depends on the extracellular cation concentration. Antimicrobial properties include bacteriostasis, which is related to its ability to sequester free iron and thus inhibit microbial growth, as well as direct bactericidal properties leading to the release of lipopolysaccharides from the bacterial outer membrane. Can also prevent bacterial biofilm development in P.aeruginosa infection. Has weak antifungal activity against C.albicans. Has anabolic, differentiating and anti-apoptotic effects on osteoblasts and can also inhibit osteoclastogenesis, possibly playing a role in the regulation of bone growth. Promotes binding of species C adenoviruses to epithelial cells, promoting adenovirus infection. Can inhibit papillomavirus infections. Stimulates the TLR4 signaling pathway leading to NF-kappa-B activation and subsequent pro-inflammatory cytokine production while also interfering with the lipopolysaccharide (LPS)-stimulated TLR4 signaling. Inhibits neutrophil granulocyte migration to sites of apoptosis, when secreted by apoptotic cells. Stimulates VEGFA-mediated endothelial cell migration and proliferation. Binds heparin, chondroitin sulfate and possibly other glycosaminoglycans (GAGs). Also binds specifically to pneumococcal surface protein A (PspA), the lipid A portion of bacterial lipopolysaccharide (LPS), lysozyme and DNA.</text>
</comment>
<comment type="function">
    <text evidence="2">Lactoferricin binds to the bacterial surface and is crucial for the bactericidal functions. Has some antiviral activity against papillomavirus infection. N-terminal region shows strong antifungal activity against C.albicans. Contains two BBXB heparin-binding consensus sequences that appear to form the predominate functional GAG-binding site.</text>
</comment>
<comment type="function">
    <text evidence="2">The lactotransferrin transferrin-like domain 1 functions as a serine protease of the peptidase S60 family that cuts arginine rich regions. This function contributes to the antimicrobial activity. Shows a preferential cleavage at -Arg-Ser-Arg-Arg-|- and -Arg-Arg-Ser-Arg-|-, and of Z-Phe-Arg-|-aminomethylcoumarin sites.</text>
</comment>
<comment type="subunit">
    <text evidence="2">Monomer. Found in a complex with LTF, CLU, EPPIN and SEMG1. Found in a complex with MPO and LTF; interacts directly with CP, allows Fe(3+) incorporation into LTF and activation of CP ferroxidase activity.</text>
</comment>
<comment type="subcellular location">
    <subcellularLocation>
        <location>Secreted</location>
    </subcellularLocation>
    <subcellularLocation>
        <location evidence="1">Cytoplasmic granule</location>
    </subcellularLocation>
    <text evidence="1">Secreted into most exocrine fluids by various endothelial cells. Stored in the secondary granules of neutrophils (By similarity).</text>
</comment>
<comment type="PTM">
    <text evidence="2">Poly-N-acetyllactosaminic carbohydrate moiety seems to be needed for TLR4 activation.</text>
</comment>
<comment type="similarity">
    <text evidence="4">Belongs to the transferrin family.</text>
</comment>
<organism>
    <name type="scientific">Equus caballus</name>
    <name type="common">Horse</name>
    <dbReference type="NCBI Taxonomy" id="9796"/>
    <lineage>
        <taxon>Eukaryota</taxon>
        <taxon>Metazoa</taxon>
        <taxon>Chordata</taxon>
        <taxon>Craniata</taxon>
        <taxon>Vertebrata</taxon>
        <taxon>Euteleostomi</taxon>
        <taxon>Mammalia</taxon>
        <taxon>Eutheria</taxon>
        <taxon>Laurasiatheria</taxon>
        <taxon>Perissodactyla</taxon>
        <taxon>Equidae</taxon>
        <taxon>Equus</taxon>
    </lineage>
</organism>
<proteinExistence type="evidence at protein level"/>